<reference key="1">
    <citation type="journal article" date="2003" name="Nature">
        <title>Unique physiological and pathogenic features of Leptospira interrogans revealed by whole-genome sequencing.</title>
        <authorList>
            <person name="Ren S.-X."/>
            <person name="Fu G."/>
            <person name="Jiang X.-G."/>
            <person name="Zeng R."/>
            <person name="Miao Y.-G."/>
            <person name="Xu H."/>
            <person name="Zhang Y.-X."/>
            <person name="Xiong H."/>
            <person name="Lu G."/>
            <person name="Lu L.-F."/>
            <person name="Jiang H.-Q."/>
            <person name="Jia J."/>
            <person name="Tu Y.-F."/>
            <person name="Jiang J.-X."/>
            <person name="Gu W.-Y."/>
            <person name="Zhang Y.-Q."/>
            <person name="Cai Z."/>
            <person name="Sheng H.-H."/>
            <person name="Yin H.-F."/>
            <person name="Zhang Y."/>
            <person name="Zhu G.-F."/>
            <person name="Wan M."/>
            <person name="Huang H.-L."/>
            <person name="Qian Z."/>
            <person name="Wang S.-Y."/>
            <person name="Ma W."/>
            <person name="Yao Z.-J."/>
            <person name="Shen Y."/>
            <person name="Qiang B.-Q."/>
            <person name="Xia Q.-C."/>
            <person name="Guo X.-K."/>
            <person name="Danchin A."/>
            <person name="Saint Girons I."/>
            <person name="Somerville R.L."/>
            <person name="Wen Y.-M."/>
            <person name="Shi M.-H."/>
            <person name="Chen Z."/>
            <person name="Xu J.-G."/>
            <person name="Zhao G.-P."/>
        </authorList>
    </citation>
    <scope>NUCLEOTIDE SEQUENCE [LARGE SCALE GENOMIC DNA]</scope>
    <source>
        <strain>56601</strain>
    </source>
</reference>
<organism>
    <name type="scientific">Leptospira interrogans serogroup Icterohaemorrhagiae serovar Lai (strain 56601)</name>
    <dbReference type="NCBI Taxonomy" id="189518"/>
    <lineage>
        <taxon>Bacteria</taxon>
        <taxon>Pseudomonadati</taxon>
        <taxon>Spirochaetota</taxon>
        <taxon>Spirochaetia</taxon>
        <taxon>Leptospirales</taxon>
        <taxon>Leptospiraceae</taxon>
        <taxon>Leptospira</taxon>
    </lineage>
</organism>
<comment type="function">
    <text evidence="1">Required for maturation of 30S ribosomal subunits.</text>
</comment>
<comment type="subcellular location">
    <subcellularLocation>
        <location evidence="1">Cytoplasm</location>
    </subcellularLocation>
</comment>
<comment type="similarity">
    <text evidence="1">Belongs to the RimP family.</text>
</comment>
<comment type="sequence caution" evidence="2">
    <conflict type="erroneous initiation">
        <sequence resource="EMBL-CDS" id="AAN48140"/>
    </conflict>
    <text>Truncated N-terminus.</text>
</comment>
<dbReference type="EMBL" id="AE010300">
    <property type="protein sequence ID" value="AAN48140.2"/>
    <property type="status" value="ALT_INIT"/>
    <property type="molecule type" value="Genomic_DNA"/>
</dbReference>
<dbReference type="RefSeq" id="NP_711122.2">
    <property type="nucleotide sequence ID" value="NC_004342.2"/>
</dbReference>
<dbReference type="SMR" id="Q8F7K3"/>
<dbReference type="STRING" id="189518.LA_0941"/>
<dbReference type="PaxDb" id="189518-LA_0941"/>
<dbReference type="EnsemblBacteria" id="AAN48140">
    <property type="protein sequence ID" value="AAN48140"/>
    <property type="gene ID" value="LA_0941"/>
</dbReference>
<dbReference type="KEGG" id="lil:LA_0941"/>
<dbReference type="PATRIC" id="fig|189518.3.peg.943"/>
<dbReference type="HOGENOM" id="CLU_132594_0_0_12"/>
<dbReference type="InParanoid" id="Q8F7K3"/>
<dbReference type="OrthoDB" id="336742at2"/>
<dbReference type="Proteomes" id="UP000001408">
    <property type="component" value="Chromosome I"/>
</dbReference>
<dbReference type="GO" id="GO:0005829">
    <property type="term" value="C:cytosol"/>
    <property type="evidence" value="ECO:0000318"/>
    <property type="project" value="GO_Central"/>
</dbReference>
<dbReference type="GO" id="GO:0000028">
    <property type="term" value="P:ribosomal small subunit assembly"/>
    <property type="evidence" value="ECO:0000318"/>
    <property type="project" value="GO_Central"/>
</dbReference>
<dbReference type="GO" id="GO:0006412">
    <property type="term" value="P:translation"/>
    <property type="evidence" value="ECO:0000318"/>
    <property type="project" value="GO_Central"/>
</dbReference>
<dbReference type="Gene3D" id="3.30.300.70">
    <property type="entry name" value="RimP-like superfamily, N-terminal"/>
    <property type="match status" value="1"/>
</dbReference>
<dbReference type="HAMAP" id="MF_01077">
    <property type="entry name" value="RimP"/>
    <property type="match status" value="1"/>
</dbReference>
<dbReference type="InterPro" id="IPR003728">
    <property type="entry name" value="Ribosome_maturation_RimP"/>
</dbReference>
<dbReference type="InterPro" id="IPR028989">
    <property type="entry name" value="RimP_N"/>
</dbReference>
<dbReference type="InterPro" id="IPR035956">
    <property type="entry name" value="RimP_N_sf"/>
</dbReference>
<dbReference type="NCBIfam" id="NF011228">
    <property type="entry name" value="PRK14635.1"/>
    <property type="match status" value="1"/>
</dbReference>
<dbReference type="PANTHER" id="PTHR33867">
    <property type="entry name" value="RIBOSOME MATURATION FACTOR RIMP"/>
    <property type="match status" value="1"/>
</dbReference>
<dbReference type="PANTHER" id="PTHR33867:SF1">
    <property type="entry name" value="RIBOSOME MATURATION FACTOR RIMP"/>
    <property type="match status" value="1"/>
</dbReference>
<dbReference type="Pfam" id="PF02576">
    <property type="entry name" value="RimP_N"/>
    <property type="match status" value="1"/>
</dbReference>
<dbReference type="SUPFAM" id="SSF75420">
    <property type="entry name" value="YhbC-like, N-terminal domain"/>
    <property type="match status" value="1"/>
</dbReference>
<feature type="chain" id="PRO_0000181884" description="Ribosome maturation factor RimP">
    <location>
        <begin position="1"/>
        <end position="162"/>
    </location>
</feature>
<gene>
    <name evidence="1" type="primary">rimP</name>
    <name type="ordered locus">LA_0941</name>
</gene>
<name>RIMP_LEPIN</name>
<proteinExistence type="inferred from homology"/>
<keyword id="KW-0963">Cytoplasm</keyword>
<keyword id="KW-1185">Reference proteome</keyword>
<keyword id="KW-0690">Ribosome biogenesis</keyword>
<sequence length="162" mass="18362">MTVSSEEISGILDGVLSLPVKLYSLKVNQRPNHSLIEVVLDNLEHPYGSVSLLECEQVSRKLKEELERISPDLDYTLKVSSAGAERKLNLPGDLDRFRGIPIRLVFRSEESEKEQEGIFRVVNRDGDQIVLEKFQKGKKSVVKKQTTLNLKDILKGNLYVNI</sequence>
<protein>
    <recommendedName>
        <fullName evidence="1">Ribosome maturation factor RimP</fullName>
    </recommendedName>
</protein>
<evidence type="ECO:0000255" key="1">
    <source>
        <dbReference type="HAMAP-Rule" id="MF_01077"/>
    </source>
</evidence>
<evidence type="ECO:0000305" key="2"/>
<accession>Q8F7K3</accession>